<proteinExistence type="inferred from homology"/>
<organism>
    <name type="scientific">Haemophilus ducreyi (strain 35000HP / ATCC 700724)</name>
    <dbReference type="NCBI Taxonomy" id="233412"/>
    <lineage>
        <taxon>Bacteria</taxon>
        <taxon>Pseudomonadati</taxon>
        <taxon>Pseudomonadota</taxon>
        <taxon>Gammaproteobacteria</taxon>
        <taxon>Pasteurellales</taxon>
        <taxon>Pasteurellaceae</taxon>
        <taxon>Haemophilus</taxon>
    </lineage>
</organism>
<comment type="function">
    <text evidence="1">Catalyzes the methylthiolation of N6-(dimethylallyl)adenosine (i(6)A), leading to the formation of 2-methylthio-N6-(dimethylallyl)adenosine (ms(2)i(6)A) at position 37 in tRNAs that read codons beginning with uridine.</text>
</comment>
<comment type="catalytic activity">
    <reaction evidence="1">
        <text>N(6)-dimethylallyladenosine(37) in tRNA + (sulfur carrier)-SH + AH2 + 2 S-adenosyl-L-methionine = 2-methylsulfanyl-N(6)-dimethylallyladenosine(37) in tRNA + (sulfur carrier)-H + 5'-deoxyadenosine + L-methionine + A + S-adenosyl-L-homocysteine + 2 H(+)</text>
        <dbReference type="Rhea" id="RHEA:37067"/>
        <dbReference type="Rhea" id="RHEA-COMP:10375"/>
        <dbReference type="Rhea" id="RHEA-COMP:10376"/>
        <dbReference type="Rhea" id="RHEA-COMP:14737"/>
        <dbReference type="Rhea" id="RHEA-COMP:14739"/>
        <dbReference type="ChEBI" id="CHEBI:13193"/>
        <dbReference type="ChEBI" id="CHEBI:15378"/>
        <dbReference type="ChEBI" id="CHEBI:17319"/>
        <dbReference type="ChEBI" id="CHEBI:17499"/>
        <dbReference type="ChEBI" id="CHEBI:29917"/>
        <dbReference type="ChEBI" id="CHEBI:57844"/>
        <dbReference type="ChEBI" id="CHEBI:57856"/>
        <dbReference type="ChEBI" id="CHEBI:59789"/>
        <dbReference type="ChEBI" id="CHEBI:64428"/>
        <dbReference type="ChEBI" id="CHEBI:74415"/>
        <dbReference type="ChEBI" id="CHEBI:74417"/>
        <dbReference type="EC" id="2.8.4.3"/>
    </reaction>
</comment>
<comment type="cofactor">
    <cofactor evidence="1">
        <name>[4Fe-4S] cluster</name>
        <dbReference type="ChEBI" id="CHEBI:49883"/>
    </cofactor>
    <text evidence="1">Binds 2 [4Fe-4S] clusters. One cluster is coordinated with 3 cysteines and an exchangeable S-adenosyl-L-methionine.</text>
</comment>
<comment type="subunit">
    <text evidence="1">Monomer.</text>
</comment>
<comment type="subcellular location">
    <subcellularLocation>
        <location evidence="1">Cytoplasm</location>
    </subcellularLocation>
</comment>
<comment type="similarity">
    <text evidence="1">Belongs to the methylthiotransferase family. MiaB subfamily.</text>
</comment>
<sequence>MAKLHITTWGCQMNEYDSSKMADLLNSTHGLELTDKPEEADILLLNTCSIREKAQEKVFSQLGRWKNWKKDKPDLIIGVGGCVASQEGEHIRERAPFVDIVFGPQTLHRLPEMINQIRSGDRAVVDISFPEIEKFDRLPEPKAEGPTAFVSIMEGCNKYCSFCVVPYTRGEEVSRPVDDVLFEIAQLAEQGVREVNLLGQNVNAYRGETFDGGICTFAELLRLVAAIDGIDRLRYTTSHPIEFTDDIIEVYRDTPELVSFLHLPIQSGADRVLTMMKRNHTALEYKAIIRKLRAVRPNIQISSDFIVGFPGETAEDFEQTMKIIEQVNFDMSFSFIYSARPGTPASDLPDDVSENEKKDRLAHLQQRINHQAMQFSRLMLGTEQRILVEGPSKKDIMELTGRTETNRVVNFIGTPNMIGKFVDIKITDVYSNSLRGEVIRTEDQMGLRIVESASSVIARTRKEDDLGVGKYAVNL</sequence>
<evidence type="ECO:0000255" key="1">
    <source>
        <dbReference type="HAMAP-Rule" id="MF_01864"/>
    </source>
</evidence>
<evidence type="ECO:0000255" key="2">
    <source>
        <dbReference type="PROSITE-ProRule" id="PRU01266"/>
    </source>
</evidence>
<gene>
    <name evidence="1" type="primary">miaB</name>
    <name type="ordered locus">HD_0226</name>
</gene>
<reference key="1">
    <citation type="submission" date="2003-06" db="EMBL/GenBank/DDBJ databases">
        <title>The complete genome sequence of Haemophilus ducreyi.</title>
        <authorList>
            <person name="Munson R.S. Jr."/>
            <person name="Ray W.C."/>
            <person name="Mahairas G."/>
            <person name="Sabo P."/>
            <person name="Mungur R."/>
            <person name="Johnson L."/>
            <person name="Nguyen D."/>
            <person name="Wang J."/>
            <person name="Forst C."/>
            <person name="Hood L."/>
        </authorList>
    </citation>
    <scope>NUCLEOTIDE SEQUENCE [LARGE SCALE GENOMIC DNA]</scope>
    <source>
        <strain>35000HP / ATCC 700724</strain>
    </source>
</reference>
<keyword id="KW-0004">4Fe-4S</keyword>
<keyword id="KW-0963">Cytoplasm</keyword>
<keyword id="KW-0408">Iron</keyword>
<keyword id="KW-0411">Iron-sulfur</keyword>
<keyword id="KW-0479">Metal-binding</keyword>
<keyword id="KW-1185">Reference proteome</keyword>
<keyword id="KW-0949">S-adenosyl-L-methionine</keyword>
<keyword id="KW-0808">Transferase</keyword>
<keyword id="KW-0819">tRNA processing</keyword>
<feature type="chain" id="PRO_0000374327" description="tRNA-2-methylthio-N(6)-dimethylallyladenosine synthase">
    <location>
        <begin position="1"/>
        <end position="475"/>
    </location>
</feature>
<feature type="domain" description="MTTase N-terminal" evidence="1">
    <location>
        <begin position="2"/>
        <end position="119"/>
    </location>
</feature>
<feature type="domain" description="Radical SAM core" evidence="2">
    <location>
        <begin position="142"/>
        <end position="374"/>
    </location>
</feature>
<feature type="domain" description="TRAM" evidence="1">
    <location>
        <begin position="377"/>
        <end position="440"/>
    </location>
</feature>
<feature type="binding site" evidence="1">
    <location>
        <position position="11"/>
    </location>
    <ligand>
        <name>[4Fe-4S] cluster</name>
        <dbReference type="ChEBI" id="CHEBI:49883"/>
        <label>1</label>
    </ligand>
</feature>
<feature type="binding site" evidence="1">
    <location>
        <position position="48"/>
    </location>
    <ligand>
        <name>[4Fe-4S] cluster</name>
        <dbReference type="ChEBI" id="CHEBI:49883"/>
        <label>1</label>
    </ligand>
</feature>
<feature type="binding site" evidence="1">
    <location>
        <position position="82"/>
    </location>
    <ligand>
        <name>[4Fe-4S] cluster</name>
        <dbReference type="ChEBI" id="CHEBI:49883"/>
        <label>1</label>
    </ligand>
</feature>
<feature type="binding site" evidence="1">
    <location>
        <position position="156"/>
    </location>
    <ligand>
        <name>[4Fe-4S] cluster</name>
        <dbReference type="ChEBI" id="CHEBI:49883"/>
        <label>2</label>
        <note>4Fe-4S-S-AdoMet</note>
    </ligand>
</feature>
<feature type="binding site" evidence="1">
    <location>
        <position position="160"/>
    </location>
    <ligand>
        <name>[4Fe-4S] cluster</name>
        <dbReference type="ChEBI" id="CHEBI:49883"/>
        <label>2</label>
        <note>4Fe-4S-S-AdoMet</note>
    </ligand>
</feature>
<feature type="binding site" evidence="1">
    <location>
        <position position="163"/>
    </location>
    <ligand>
        <name>[4Fe-4S] cluster</name>
        <dbReference type="ChEBI" id="CHEBI:49883"/>
        <label>2</label>
        <note>4Fe-4S-S-AdoMet</note>
    </ligand>
</feature>
<dbReference type="EC" id="2.8.4.3" evidence="1"/>
<dbReference type="EMBL" id="AE017143">
    <property type="protein sequence ID" value="AAP95213.1"/>
    <property type="molecule type" value="Genomic_DNA"/>
</dbReference>
<dbReference type="RefSeq" id="WP_010944266.1">
    <property type="nucleotide sequence ID" value="NC_002940.2"/>
</dbReference>
<dbReference type="SMR" id="Q7VP74"/>
<dbReference type="STRING" id="233412.HD_0226"/>
<dbReference type="KEGG" id="hdu:HD_0226"/>
<dbReference type="eggNOG" id="COG0621">
    <property type="taxonomic scope" value="Bacteria"/>
</dbReference>
<dbReference type="HOGENOM" id="CLU_018697_2_0_6"/>
<dbReference type="OrthoDB" id="9805215at2"/>
<dbReference type="Proteomes" id="UP000001022">
    <property type="component" value="Chromosome"/>
</dbReference>
<dbReference type="GO" id="GO:0005829">
    <property type="term" value="C:cytosol"/>
    <property type="evidence" value="ECO:0007669"/>
    <property type="project" value="TreeGrafter"/>
</dbReference>
<dbReference type="GO" id="GO:0051539">
    <property type="term" value="F:4 iron, 4 sulfur cluster binding"/>
    <property type="evidence" value="ECO:0007669"/>
    <property type="project" value="UniProtKB-UniRule"/>
</dbReference>
<dbReference type="GO" id="GO:0046872">
    <property type="term" value="F:metal ion binding"/>
    <property type="evidence" value="ECO:0007669"/>
    <property type="project" value="UniProtKB-KW"/>
</dbReference>
<dbReference type="GO" id="GO:0035597">
    <property type="term" value="F:N6-isopentenyladenosine methylthiotransferase activity"/>
    <property type="evidence" value="ECO:0007669"/>
    <property type="project" value="TreeGrafter"/>
</dbReference>
<dbReference type="CDD" id="cd01335">
    <property type="entry name" value="Radical_SAM"/>
    <property type="match status" value="1"/>
</dbReference>
<dbReference type="FunFam" id="3.40.50.12160:FF:000001">
    <property type="entry name" value="tRNA-2-methylthio-N(6)-dimethylallyladenosine synthase"/>
    <property type="match status" value="1"/>
</dbReference>
<dbReference type="FunFam" id="3.80.30.20:FF:000001">
    <property type="entry name" value="tRNA-2-methylthio-N(6)-dimethylallyladenosine synthase 2"/>
    <property type="match status" value="1"/>
</dbReference>
<dbReference type="Gene3D" id="3.40.50.12160">
    <property type="entry name" value="Methylthiotransferase, N-terminal domain"/>
    <property type="match status" value="1"/>
</dbReference>
<dbReference type="Gene3D" id="3.80.30.20">
    <property type="entry name" value="tm_1862 like domain"/>
    <property type="match status" value="1"/>
</dbReference>
<dbReference type="HAMAP" id="MF_01864">
    <property type="entry name" value="tRNA_metthiotr_MiaB"/>
    <property type="match status" value="1"/>
</dbReference>
<dbReference type="InterPro" id="IPR006638">
    <property type="entry name" value="Elp3/MiaA/NifB-like_rSAM"/>
</dbReference>
<dbReference type="InterPro" id="IPR005839">
    <property type="entry name" value="Methylthiotransferase"/>
</dbReference>
<dbReference type="InterPro" id="IPR020612">
    <property type="entry name" value="Methylthiotransferase_CS"/>
</dbReference>
<dbReference type="InterPro" id="IPR013848">
    <property type="entry name" value="Methylthiotransferase_N"/>
</dbReference>
<dbReference type="InterPro" id="IPR038135">
    <property type="entry name" value="Methylthiotransferase_N_sf"/>
</dbReference>
<dbReference type="InterPro" id="IPR006463">
    <property type="entry name" value="MiaB_methiolase"/>
</dbReference>
<dbReference type="InterPro" id="IPR007197">
    <property type="entry name" value="rSAM"/>
</dbReference>
<dbReference type="InterPro" id="IPR023404">
    <property type="entry name" value="rSAM_horseshoe"/>
</dbReference>
<dbReference type="InterPro" id="IPR002792">
    <property type="entry name" value="TRAM_dom"/>
</dbReference>
<dbReference type="NCBIfam" id="TIGR01574">
    <property type="entry name" value="miaB-methiolase"/>
    <property type="match status" value="1"/>
</dbReference>
<dbReference type="NCBIfam" id="TIGR00089">
    <property type="entry name" value="MiaB/RimO family radical SAM methylthiotransferase"/>
    <property type="match status" value="1"/>
</dbReference>
<dbReference type="PANTHER" id="PTHR43020">
    <property type="entry name" value="CDK5 REGULATORY SUBUNIT-ASSOCIATED PROTEIN 1"/>
    <property type="match status" value="1"/>
</dbReference>
<dbReference type="PANTHER" id="PTHR43020:SF2">
    <property type="entry name" value="MITOCHONDRIAL TRNA METHYLTHIOTRANSFERASE CDK5RAP1"/>
    <property type="match status" value="1"/>
</dbReference>
<dbReference type="Pfam" id="PF04055">
    <property type="entry name" value="Radical_SAM"/>
    <property type="match status" value="1"/>
</dbReference>
<dbReference type="Pfam" id="PF01938">
    <property type="entry name" value="TRAM"/>
    <property type="match status" value="1"/>
</dbReference>
<dbReference type="Pfam" id="PF00919">
    <property type="entry name" value="UPF0004"/>
    <property type="match status" value="1"/>
</dbReference>
<dbReference type="SFLD" id="SFLDF00273">
    <property type="entry name" value="(dimethylallyl)adenosine_tRNA"/>
    <property type="match status" value="1"/>
</dbReference>
<dbReference type="SFLD" id="SFLDG01082">
    <property type="entry name" value="B12-binding_domain_containing"/>
    <property type="match status" value="1"/>
</dbReference>
<dbReference type="SFLD" id="SFLDS00029">
    <property type="entry name" value="Radical_SAM"/>
    <property type="match status" value="1"/>
</dbReference>
<dbReference type="SMART" id="SM00729">
    <property type="entry name" value="Elp3"/>
    <property type="match status" value="1"/>
</dbReference>
<dbReference type="SUPFAM" id="SSF102114">
    <property type="entry name" value="Radical SAM enzymes"/>
    <property type="match status" value="1"/>
</dbReference>
<dbReference type="PROSITE" id="PS51449">
    <property type="entry name" value="MTTASE_N"/>
    <property type="match status" value="1"/>
</dbReference>
<dbReference type="PROSITE" id="PS01278">
    <property type="entry name" value="MTTASE_RADICAL"/>
    <property type="match status" value="1"/>
</dbReference>
<dbReference type="PROSITE" id="PS51918">
    <property type="entry name" value="RADICAL_SAM"/>
    <property type="match status" value="1"/>
</dbReference>
<dbReference type="PROSITE" id="PS50926">
    <property type="entry name" value="TRAM"/>
    <property type="match status" value="1"/>
</dbReference>
<protein>
    <recommendedName>
        <fullName evidence="1">tRNA-2-methylthio-N(6)-dimethylallyladenosine synthase</fullName>
        <ecNumber evidence="1">2.8.4.3</ecNumber>
    </recommendedName>
    <alternativeName>
        <fullName evidence="1">(Dimethylallyl)adenosine tRNA methylthiotransferase MiaB</fullName>
    </alternativeName>
    <alternativeName>
        <fullName evidence="1">tRNA-i(6)A37 methylthiotransferase</fullName>
    </alternativeName>
</protein>
<name>MIAB_HAEDU</name>
<accession>Q7VP74</accession>